<keyword id="KW-0963">Cytoplasm</keyword>
<keyword id="KW-0206">Cytoskeleton</keyword>
<keyword id="KW-0342">GTP-binding</keyword>
<keyword id="KW-0493">Microtubule</keyword>
<keyword id="KW-0547">Nucleotide-binding</keyword>
<feature type="chain" id="PRO_0000048463" description="Tubulin gamma-2 chain">
    <location>
        <begin position="1"/>
        <end position="461"/>
    </location>
</feature>
<feature type="binding site" evidence="1">
    <location>
        <begin position="142"/>
        <end position="148"/>
    </location>
    <ligand>
        <name>GTP</name>
        <dbReference type="ChEBI" id="CHEBI:37565"/>
    </ligand>
</feature>
<name>TBG2_EUPOC</name>
<evidence type="ECO:0000255" key="1"/>
<evidence type="ECO:0000305" key="2"/>
<dbReference type="EMBL" id="Y09553">
    <property type="protein sequence ID" value="CAA70744.1"/>
    <property type="molecule type" value="Genomic_DNA"/>
</dbReference>
<dbReference type="EMBL" id="Y17254">
    <property type="protein sequence ID" value="CAA76714.1"/>
    <property type="molecule type" value="Genomic_DNA"/>
</dbReference>
<dbReference type="SMR" id="P90548"/>
<dbReference type="GO" id="GO:0005813">
    <property type="term" value="C:centrosome"/>
    <property type="evidence" value="ECO:0007669"/>
    <property type="project" value="UniProtKB-SubCell"/>
</dbReference>
<dbReference type="GO" id="GO:0005737">
    <property type="term" value="C:cytoplasm"/>
    <property type="evidence" value="ECO:0007669"/>
    <property type="project" value="UniProtKB-KW"/>
</dbReference>
<dbReference type="GO" id="GO:0000930">
    <property type="term" value="C:gamma-tubulin complex"/>
    <property type="evidence" value="ECO:0007669"/>
    <property type="project" value="InterPro"/>
</dbReference>
<dbReference type="GO" id="GO:0005874">
    <property type="term" value="C:microtubule"/>
    <property type="evidence" value="ECO:0007669"/>
    <property type="project" value="UniProtKB-KW"/>
</dbReference>
<dbReference type="GO" id="GO:0005525">
    <property type="term" value="F:GTP binding"/>
    <property type="evidence" value="ECO:0007669"/>
    <property type="project" value="UniProtKB-KW"/>
</dbReference>
<dbReference type="GO" id="GO:0031122">
    <property type="term" value="P:cytoplasmic microtubule organization"/>
    <property type="evidence" value="ECO:0007669"/>
    <property type="project" value="InterPro"/>
</dbReference>
<dbReference type="GO" id="GO:0007020">
    <property type="term" value="P:microtubule nucleation"/>
    <property type="evidence" value="ECO:0007669"/>
    <property type="project" value="InterPro"/>
</dbReference>
<dbReference type="CDD" id="cd02188">
    <property type="entry name" value="gamma_tubulin"/>
    <property type="match status" value="1"/>
</dbReference>
<dbReference type="FunFam" id="1.10.287.600:FF:000004">
    <property type="entry name" value="Tubulin gamma chain"/>
    <property type="match status" value="1"/>
</dbReference>
<dbReference type="FunFam" id="3.30.1330.20:FF:000003">
    <property type="entry name" value="Tubulin gamma chain"/>
    <property type="match status" value="1"/>
</dbReference>
<dbReference type="FunFam" id="3.40.50.1440:FF:000010">
    <property type="entry name" value="Tubulin gamma chain"/>
    <property type="match status" value="1"/>
</dbReference>
<dbReference type="Gene3D" id="1.10.287.600">
    <property type="entry name" value="Helix hairpin bin"/>
    <property type="match status" value="1"/>
</dbReference>
<dbReference type="Gene3D" id="3.30.1330.20">
    <property type="entry name" value="Tubulin/FtsZ, C-terminal domain"/>
    <property type="match status" value="1"/>
</dbReference>
<dbReference type="Gene3D" id="3.40.50.1440">
    <property type="entry name" value="Tubulin/FtsZ, GTPase domain"/>
    <property type="match status" value="1"/>
</dbReference>
<dbReference type="InterPro" id="IPR002454">
    <property type="entry name" value="Gamma_tubulin"/>
</dbReference>
<dbReference type="InterPro" id="IPR008280">
    <property type="entry name" value="Tub_FtsZ_C"/>
</dbReference>
<dbReference type="InterPro" id="IPR000217">
    <property type="entry name" value="Tubulin"/>
</dbReference>
<dbReference type="InterPro" id="IPR037103">
    <property type="entry name" value="Tubulin/FtsZ-like_C"/>
</dbReference>
<dbReference type="InterPro" id="IPR018316">
    <property type="entry name" value="Tubulin/FtsZ_2-layer-sand-dom"/>
</dbReference>
<dbReference type="InterPro" id="IPR036525">
    <property type="entry name" value="Tubulin/FtsZ_GTPase_sf"/>
</dbReference>
<dbReference type="InterPro" id="IPR023123">
    <property type="entry name" value="Tubulin_C"/>
</dbReference>
<dbReference type="InterPro" id="IPR017975">
    <property type="entry name" value="Tubulin_CS"/>
</dbReference>
<dbReference type="InterPro" id="IPR003008">
    <property type="entry name" value="Tubulin_FtsZ_GTPase"/>
</dbReference>
<dbReference type="PANTHER" id="PTHR11588">
    <property type="entry name" value="TUBULIN"/>
    <property type="match status" value="1"/>
</dbReference>
<dbReference type="Pfam" id="PF00091">
    <property type="entry name" value="Tubulin"/>
    <property type="match status" value="1"/>
</dbReference>
<dbReference type="Pfam" id="PF03953">
    <property type="entry name" value="Tubulin_C"/>
    <property type="match status" value="1"/>
</dbReference>
<dbReference type="PRINTS" id="PR01164">
    <property type="entry name" value="GAMMATUBULIN"/>
</dbReference>
<dbReference type="PRINTS" id="PR01161">
    <property type="entry name" value="TUBULIN"/>
</dbReference>
<dbReference type="SMART" id="SM00864">
    <property type="entry name" value="Tubulin"/>
    <property type="match status" value="1"/>
</dbReference>
<dbReference type="SMART" id="SM00865">
    <property type="entry name" value="Tubulin_C"/>
    <property type="match status" value="1"/>
</dbReference>
<dbReference type="SUPFAM" id="SSF55307">
    <property type="entry name" value="Tubulin C-terminal domain-like"/>
    <property type="match status" value="1"/>
</dbReference>
<dbReference type="SUPFAM" id="SSF52490">
    <property type="entry name" value="Tubulin nucleotide-binding domain-like"/>
    <property type="match status" value="1"/>
</dbReference>
<dbReference type="PROSITE" id="PS00227">
    <property type="entry name" value="TUBULIN"/>
    <property type="match status" value="1"/>
</dbReference>
<protein>
    <recommendedName>
        <fullName>Tubulin gamma-2 chain</fullName>
    </recommendedName>
    <alternativeName>
        <fullName>Gamma-2-tubulin</fullName>
    </alternativeName>
</protein>
<proteinExistence type="inferred from homology"/>
<sequence length="461" mass="51952">MPREIITCQVGQCGNQIGMEFWKQLCMEHGINPEGILEDFAVNGEDRKDVFFYQADDEHYVPRAVLIDLEPRVINGIQKSAYSSLYNPENIYIAKHGGGAGNNWGRGYTDAEKVQDEILEMIDREADGSDSLEGFVLTHSIAGGTGSGFGSYLLERLNDHYPKKLIQTYSVFPIENDVVVQPYNCLLSIKRLTLNADCVVVLDNNALTSIAVDRLKILQPTFSQINSIVSTVMAASTTTLRYPGYMNNDMVGLIASLVPTPRCHFLMTGYTPLSLDQKFTSVRKTTVLDVMRRLLQTKNIMVTGAVKKGAYMSILNVIQGDVDPTQVHKSLQRIRERKLANFIPWGPASIQVALSKKSPYIDSGHKVSGLMLANHTGIRSIFKVLYDQYRTFRKRDAYMNIFKQTKIFEDNLDEFDSSDEVVKSLIDEYAAAEKMDYINWGSDDDDMQFDPREPPKFSNIQ</sequence>
<comment type="function">
    <text>Tubulin is the major constituent of microtubules. The gamma chain is found at microtubule organizing centers (MTOC) such as the spindle poles or the centrosome, suggesting that it is involved in the minus-end nucleation of microtubule assembly.</text>
</comment>
<comment type="subcellular location">
    <subcellularLocation>
        <location evidence="2">Cytoplasm</location>
        <location evidence="2">Cytoskeleton</location>
        <location evidence="2">Microtubule organizing center</location>
        <location evidence="2">Centrosome</location>
    </subcellularLocation>
</comment>
<comment type="similarity">
    <text evidence="2">Belongs to the tubulin family.</text>
</comment>
<reference key="1">
    <citation type="submission" date="1998-05" db="EMBL/GenBank/DDBJ databases">
        <title>The two gamma tubulin genes of Euplotes octocarinatus code for a slightly different protein.</title>
        <authorList>
            <person name="Tan M."/>
            <person name="Liang A."/>
            <person name="Heckmann K."/>
        </authorList>
    </citation>
    <scope>NUCLEOTIDE SEQUENCE [GENOMIC DNA]</scope>
</reference>
<accession>P90548</accession>
<organism>
    <name type="scientific">Euplotoides octocarinatus</name>
    <name type="common">Freshwater ciliate</name>
    <name type="synonym">Euplotes octocarinatus</name>
    <dbReference type="NCBI Taxonomy" id="2716877"/>
    <lineage>
        <taxon>Eukaryota</taxon>
        <taxon>Sar</taxon>
        <taxon>Alveolata</taxon>
        <taxon>Ciliophora</taxon>
        <taxon>Intramacronucleata</taxon>
        <taxon>Spirotrichea</taxon>
        <taxon>Hypotrichia</taxon>
        <taxon>Euplotida</taxon>
        <taxon>Euplotidae</taxon>
        <taxon>Euplotes</taxon>
    </lineage>
</organism>